<protein>
    <recommendedName>
        <fullName evidence="1">Aspartate--tRNA ligase</fullName>
        <ecNumber evidence="1">6.1.1.12</ecNumber>
    </recommendedName>
    <alternativeName>
        <fullName evidence="1">Aspartyl-tRNA synthetase</fullName>
        <shortName evidence="1">AspRS</shortName>
    </alternativeName>
</protein>
<proteinExistence type="inferred from homology"/>
<reference key="1">
    <citation type="journal article" date="2008" name="J. Bacteriol.">
        <title>The complete genome sequence of Actinobacillus pleuropneumoniae L20 (serotype 5b).</title>
        <authorList>
            <person name="Foote S.J."/>
            <person name="Bosse J.T."/>
            <person name="Bouevitch A.B."/>
            <person name="Langford P.R."/>
            <person name="Young N.M."/>
            <person name="Nash J.H.E."/>
        </authorList>
    </citation>
    <scope>NUCLEOTIDE SEQUENCE [LARGE SCALE GENOMIC DNA]</scope>
    <source>
        <strain>L20</strain>
    </source>
</reference>
<feature type="chain" id="PRO_1000006628" description="Aspartate--tRNA ligase">
    <location>
        <begin position="1"/>
        <end position="591"/>
    </location>
</feature>
<feature type="region of interest" description="Aspartate" evidence="1">
    <location>
        <begin position="196"/>
        <end position="199"/>
    </location>
</feature>
<feature type="binding site" evidence="1">
    <location>
        <position position="172"/>
    </location>
    <ligand>
        <name>L-aspartate</name>
        <dbReference type="ChEBI" id="CHEBI:29991"/>
    </ligand>
</feature>
<feature type="binding site" evidence="1">
    <location>
        <begin position="218"/>
        <end position="220"/>
    </location>
    <ligand>
        <name>ATP</name>
        <dbReference type="ChEBI" id="CHEBI:30616"/>
    </ligand>
</feature>
<feature type="binding site" evidence="1">
    <location>
        <position position="218"/>
    </location>
    <ligand>
        <name>L-aspartate</name>
        <dbReference type="ChEBI" id="CHEBI:29991"/>
    </ligand>
</feature>
<feature type="binding site" evidence="1">
    <location>
        <position position="227"/>
    </location>
    <ligand>
        <name>ATP</name>
        <dbReference type="ChEBI" id="CHEBI:30616"/>
    </ligand>
</feature>
<feature type="binding site" evidence="1">
    <location>
        <position position="449"/>
    </location>
    <ligand>
        <name>L-aspartate</name>
        <dbReference type="ChEBI" id="CHEBI:29991"/>
    </ligand>
</feature>
<feature type="binding site" evidence="1">
    <location>
        <position position="483"/>
    </location>
    <ligand>
        <name>ATP</name>
        <dbReference type="ChEBI" id="CHEBI:30616"/>
    </ligand>
</feature>
<feature type="binding site" evidence="1">
    <location>
        <position position="490"/>
    </location>
    <ligand>
        <name>L-aspartate</name>
        <dbReference type="ChEBI" id="CHEBI:29991"/>
    </ligand>
</feature>
<feature type="binding site" evidence="1">
    <location>
        <begin position="535"/>
        <end position="538"/>
    </location>
    <ligand>
        <name>ATP</name>
        <dbReference type="ChEBI" id="CHEBI:30616"/>
    </ligand>
</feature>
<comment type="function">
    <text evidence="1">Catalyzes the attachment of L-aspartate to tRNA(Asp) in a two-step reaction: L-aspartate is first activated by ATP to form Asp-AMP and then transferred to the acceptor end of tRNA(Asp).</text>
</comment>
<comment type="catalytic activity">
    <reaction evidence="1">
        <text>tRNA(Asp) + L-aspartate + ATP = L-aspartyl-tRNA(Asp) + AMP + diphosphate</text>
        <dbReference type="Rhea" id="RHEA:19649"/>
        <dbReference type="Rhea" id="RHEA-COMP:9660"/>
        <dbReference type="Rhea" id="RHEA-COMP:9678"/>
        <dbReference type="ChEBI" id="CHEBI:29991"/>
        <dbReference type="ChEBI" id="CHEBI:30616"/>
        <dbReference type="ChEBI" id="CHEBI:33019"/>
        <dbReference type="ChEBI" id="CHEBI:78442"/>
        <dbReference type="ChEBI" id="CHEBI:78516"/>
        <dbReference type="ChEBI" id="CHEBI:456215"/>
        <dbReference type="EC" id="6.1.1.12"/>
    </reaction>
</comment>
<comment type="subunit">
    <text evidence="1">Homodimer.</text>
</comment>
<comment type="subcellular location">
    <subcellularLocation>
        <location evidence="1">Cytoplasm</location>
    </subcellularLocation>
</comment>
<comment type="similarity">
    <text evidence="1">Belongs to the class-II aminoacyl-tRNA synthetase family. Type 1 subfamily.</text>
</comment>
<evidence type="ECO:0000255" key="1">
    <source>
        <dbReference type="HAMAP-Rule" id="MF_00044"/>
    </source>
</evidence>
<keyword id="KW-0030">Aminoacyl-tRNA synthetase</keyword>
<keyword id="KW-0067">ATP-binding</keyword>
<keyword id="KW-0963">Cytoplasm</keyword>
<keyword id="KW-0436">Ligase</keyword>
<keyword id="KW-0547">Nucleotide-binding</keyword>
<keyword id="KW-0648">Protein biosynthesis</keyword>
<keyword id="KW-1185">Reference proteome</keyword>
<sequence length="591" mass="66809">MMRSHYCGALNRSHVGQTVTLSGWVHRVRNLGRFIFMQIRDREGIVQVFFDEKDEAIFKIASSLRSEACVQIQGEVIARDESQINKEMATGEIEVLVKNVVVYNNADVLPLDFNQNNTEEQRLKYRYLDLRRPEMAEKLKTRAKITSFVRRYMDDNGFLDIETPMLTKATPEGARDYLVPSRVHNGKFYALPQSPQLFKQLLMMSGFDRYYQIVKCFRDEDLRADRQPEFTQIDVETSFLTAEEVRELMENMIHGLWLDRLNVDLGKFPIMTWQEAMQRFGSDKPDLRNPLELVDVADILKDVEFKVFNEPANSADGRVTVLRVPNGASLTRKQIDEYTQFVGIYGAKGLAWAKINNVNAGMEGIQSPVAKFLNEEVFKALIERTNATSGDILFFGADKWQVVTDSMGALRLKVGRDLALTDLSAWKPLWVIDFPMFEKDDEGNLSAMHHPFTSPKNLTPEELAANPVNAVANAYDMVINGYEVGGGSVRIYDPKMQQTVFGILGINEQDQQEKFGFLLDALKFGTPPHAGLAFGLDRLTMLITGTENIRDVIAFPKTTAAACLMTEAPSFANPQALEELGIAVLKKEKAE</sequence>
<dbReference type="EC" id="6.1.1.12" evidence="1"/>
<dbReference type="EMBL" id="CP000569">
    <property type="protein sequence ID" value="ABN74239.1"/>
    <property type="molecule type" value="Genomic_DNA"/>
</dbReference>
<dbReference type="RefSeq" id="WP_005598050.1">
    <property type="nucleotide sequence ID" value="NC_009053.1"/>
</dbReference>
<dbReference type="SMR" id="A3N1F3"/>
<dbReference type="STRING" id="416269.APL_1149"/>
<dbReference type="EnsemblBacteria" id="ABN74239">
    <property type="protein sequence ID" value="ABN74239"/>
    <property type="gene ID" value="APL_1149"/>
</dbReference>
<dbReference type="GeneID" id="48599385"/>
<dbReference type="KEGG" id="apl:APL_1149"/>
<dbReference type="eggNOG" id="COG0173">
    <property type="taxonomic scope" value="Bacteria"/>
</dbReference>
<dbReference type="HOGENOM" id="CLU_014330_3_2_6"/>
<dbReference type="Proteomes" id="UP000001432">
    <property type="component" value="Chromosome"/>
</dbReference>
<dbReference type="GO" id="GO:0005737">
    <property type="term" value="C:cytoplasm"/>
    <property type="evidence" value="ECO:0007669"/>
    <property type="project" value="UniProtKB-SubCell"/>
</dbReference>
<dbReference type="GO" id="GO:0004815">
    <property type="term" value="F:aspartate-tRNA ligase activity"/>
    <property type="evidence" value="ECO:0007669"/>
    <property type="project" value="UniProtKB-UniRule"/>
</dbReference>
<dbReference type="GO" id="GO:0005524">
    <property type="term" value="F:ATP binding"/>
    <property type="evidence" value="ECO:0007669"/>
    <property type="project" value="UniProtKB-UniRule"/>
</dbReference>
<dbReference type="GO" id="GO:0003676">
    <property type="term" value="F:nucleic acid binding"/>
    <property type="evidence" value="ECO:0007669"/>
    <property type="project" value="InterPro"/>
</dbReference>
<dbReference type="GO" id="GO:0006422">
    <property type="term" value="P:aspartyl-tRNA aminoacylation"/>
    <property type="evidence" value="ECO:0007669"/>
    <property type="project" value="UniProtKB-UniRule"/>
</dbReference>
<dbReference type="CDD" id="cd00777">
    <property type="entry name" value="AspRS_core"/>
    <property type="match status" value="1"/>
</dbReference>
<dbReference type="CDD" id="cd04317">
    <property type="entry name" value="EcAspRS_like_N"/>
    <property type="match status" value="1"/>
</dbReference>
<dbReference type="Gene3D" id="3.30.930.10">
    <property type="entry name" value="Bira Bifunctional Protein, Domain 2"/>
    <property type="match status" value="1"/>
</dbReference>
<dbReference type="Gene3D" id="3.30.1360.30">
    <property type="entry name" value="GAD-like domain"/>
    <property type="match status" value="1"/>
</dbReference>
<dbReference type="Gene3D" id="2.40.50.140">
    <property type="entry name" value="Nucleic acid-binding proteins"/>
    <property type="match status" value="1"/>
</dbReference>
<dbReference type="HAMAP" id="MF_00044">
    <property type="entry name" value="Asp_tRNA_synth_type1"/>
    <property type="match status" value="1"/>
</dbReference>
<dbReference type="InterPro" id="IPR004364">
    <property type="entry name" value="Aa-tRNA-synt_II"/>
</dbReference>
<dbReference type="InterPro" id="IPR006195">
    <property type="entry name" value="aa-tRNA-synth_II"/>
</dbReference>
<dbReference type="InterPro" id="IPR045864">
    <property type="entry name" value="aa-tRNA-synth_II/BPL/LPL"/>
</dbReference>
<dbReference type="InterPro" id="IPR004524">
    <property type="entry name" value="Asp-tRNA-ligase_1"/>
</dbReference>
<dbReference type="InterPro" id="IPR047089">
    <property type="entry name" value="Asp-tRNA-ligase_1_N"/>
</dbReference>
<dbReference type="InterPro" id="IPR002312">
    <property type="entry name" value="Asp/Asn-tRNA-synth_IIb"/>
</dbReference>
<dbReference type="InterPro" id="IPR047090">
    <property type="entry name" value="AspRS_core"/>
</dbReference>
<dbReference type="InterPro" id="IPR004115">
    <property type="entry name" value="GAD-like_sf"/>
</dbReference>
<dbReference type="InterPro" id="IPR029351">
    <property type="entry name" value="GAD_dom"/>
</dbReference>
<dbReference type="InterPro" id="IPR012340">
    <property type="entry name" value="NA-bd_OB-fold"/>
</dbReference>
<dbReference type="InterPro" id="IPR004365">
    <property type="entry name" value="NA-bd_OB_tRNA"/>
</dbReference>
<dbReference type="NCBIfam" id="TIGR00459">
    <property type="entry name" value="aspS_bact"/>
    <property type="match status" value="1"/>
</dbReference>
<dbReference type="NCBIfam" id="NF001750">
    <property type="entry name" value="PRK00476.1"/>
    <property type="match status" value="1"/>
</dbReference>
<dbReference type="PANTHER" id="PTHR22594:SF5">
    <property type="entry name" value="ASPARTATE--TRNA LIGASE, MITOCHONDRIAL"/>
    <property type="match status" value="1"/>
</dbReference>
<dbReference type="PANTHER" id="PTHR22594">
    <property type="entry name" value="ASPARTYL/LYSYL-TRNA SYNTHETASE"/>
    <property type="match status" value="1"/>
</dbReference>
<dbReference type="Pfam" id="PF02938">
    <property type="entry name" value="GAD"/>
    <property type="match status" value="1"/>
</dbReference>
<dbReference type="Pfam" id="PF00152">
    <property type="entry name" value="tRNA-synt_2"/>
    <property type="match status" value="1"/>
</dbReference>
<dbReference type="Pfam" id="PF01336">
    <property type="entry name" value="tRNA_anti-codon"/>
    <property type="match status" value="1"/>
</dbReference>
<dbReference type="PRINTS" id="PR01042">
    <property type="entry name" value="TRNASYNTHASP"/>
</dbReference>
<dbReference type="SUPFAM" id="SSF55681">
    <property type="entry name" value="Class II aaRS and biotin synthetases"/>
    <property type="match status" value="1"/>
</dbReference>
<dbReference type="SUPFAM" id="SSF55261">
    <property type="entry name" value="GAD domain-like"/>
    <property type="match status" value="1"/>
</dbReference>
<dbReference type="SUPFAM" id="SSF50249">
    <property type="entry name" value="Nucleic acid-binding proteins"/>
    <property type="match status" value="1"/>
</dbReference>
<dbReference type="PROSITE" id="PS50862">
    <property type="entry name" value="AA_TRNA_LIGASE_II"/>
    <property type="match status" value="1"/>
</dbReference>
<organism>
    <name type="scientific">Actinobacillus pleuropneumoniae serotype 5b (strain L20)</name>
    <dbReference type="NCBI Taxonomy" id="416269"/>
    <lineage>
        <taxon>Bacteria</taxon>
        <taxon>Pseudomonadati</taxon>
        <taxon>Pseudomonadota</taxon>
        <taxon>Gammaproteobacteria</taxon>
        <taxon>Pasteurellales</taxon>
        <taxon>Pasteurellaceae</taxon>
        <taxon>Actinobacillus</taxon>
    </lineage>
</organism>
<accession>A3N1F3</accession>
<gene>
    <name evidence="1" type="primary">aspS</name>
    <name type="ordered locus">APL_1149</name>
</gene>
<name>SYD_ACTP2</name>